<name>GRB10_MOUSE</name>
<reference key="1">
    <citation type="journal article" date="1995" name="Oncogene">
        <title>The cloning of Grb10 reveals a new family of SH2 domain proteins.</title>
        <authorList>
            <person name="Ooi J."/>
            <person name="Yajnik V."/>
            <person name="Immanuel D."/>
            <person name="Gordon M."/>
            <person name="Moskow J.J."/>
            <person name="Buchberg A."/>
            <person name="Margolis B."/>
        </authorList>
    </citation>
    <scope>NUCLEOTIDE SEQUENCE [MRNA] (ISOFORM 1)</scope>
    <scope>INTERACTION WITH EGFR</scope>
    <scope>TISSUE SPECIFICITY</scope>
    <scope>PHOSPHORYLATION</scope>
    <source>
        <strain>SWR/J</strain>
    </source>
</reference>
<reference key="2">
    <citation type="journal article" date="1997" name="J. Clin. Invest.">
        <title>The adapter protein Grb10 associates preferentially with the insulin receptor as compared with the IGF-I receptor in mouse fibroblasts.</title>
        <authorList>
            <person name="Laviola L."/>
            <person name="Giorgino F."/>
            <person name="Chow J.C."/>
            <person name="Baquero J.A."/>
            <person name="Hansen H."/>
            <person name="Ooi J."/>
            <person name="Zhu J."/>
            <person name="Riedel H."/>
            <person name="Smith R.J."/>
        </authorList>
    </citation>
    <scope>NUCLEOTIDE SEQUENCE [MRNA] (ISOFORM 2)</scope>
    <scope>INTERACTION WITH INSR AND IGF1R</scope>
    <scope>TISSUE SPECIFICITY</scope>
</reference>
<reference key="3">
    <citation type="journal article" date="2005" name="Science">
        <title>The transcriptional landscape of the mammalian genome.</title>
        <authorList>
            <person name="Carninci P."/>
            <person name="Kasukawa T."/>
            <person name="Katayama S."/>
            <person name="Gough J."/>
            <person name="Frith M.C."/>
            <person name="Maeda N."/>
            <person name="Oyama R."/>
            <person name="Ravasi T."/>
            <person name="Lenhard B."/>
            <person name="Wells C."/>
            <person name="Kodzius R."/>
            <person name="Shimokawa K."/>
            <person name="Bajic V.B."/>
            <person name="Brenner S.E."/>
            <person name="Batalov S."/>
            <person name="Forrest A.R."/>
            <person name="Zavolan M."/>
            <person name="Davis M.J."/>
            <person name="Wilming L.G."/>
            <person name="Aidinis V."/>
            <person name="Allen J.E."/>
            <person name="Ambesi-Impiombato A."/>
            <person name="Apweiler R."/>
            <person name="Aturaliya R.N."/>
            <person name="Bailey T.L."/>
            <person name="Bansal M."/>
            <person name="Baxter L."/>
            <person name="Beisel K.W."/>
            <person name="Bersano T."/>
            <person name="Bono H."/>
            <person name="Chalk A.M."/>
            <person name="Chiu K.P."/>
            <person name="Choudhary V."/>
            <person name="Christoffels A."/>
            <person name="Clutterbuck D.R."/>
            <person name="Crowe M.L."/>
            <person name="Dalla E."/>
            <person name="Dalrymple B.P."/>
            <person name="de Bono B."/>
            <person name="Della Gatta G."/>
            <person name="di Bernardo D."/>
            <person name="Down T."/>
            <person name="Engstrom P."/>
            <person name="Fagiolini M."/>
            <person name="Faulkner G."/>
            <person name="Fletcher C.F."/>
            <person name="Fukushima T."/>
            <person name="Furuno M."/>
            <person name="Futaki S."/>
            <person name="Gariboldi M."/>
            <person name="Georgii-Hemming P."/>
            <person name="Gingeras T.R."/>
            <person name="Gojobori T."/>
            <person name="Green R.E."/>
            <person name="Gustincich S."/>
            <person name="Harbers M."/>
            <person name="Hayashi Y."/>
            <person name="Hensch T.K."/>
            <person name="Hirokawa N."/>
            <person name="Hill D."/>
            <person name="Huminiecki L."/>
            <person name="Iacono M."/>
            <person name="Ikeo K."/>
            <person name="Iwama A."/>
            <person name="Ishikawa T."/>
            <person name="Jakt M."/>
            <person name="Kanapin A."/>
            <person name="Katoh M."/>
            <person name="Kawasawa Y."/>
            <person name="Kelso J."/>
            <person name="Kitamura H."/>
            <person name="Kitano H."/>
            <person name="Kollias G."/>
            <person name="Krishnan S.P."/>
            <person name="Kruger A."/>
            <person name="Kummerfeld S.K."/>
            <person name="Kurochkin I.V."/>
            <person name="Lareau L.F."/>
            <person name="Lazarevic D."/>
            <person name="Lipovich L."/>
            <person name="Liu J."/>
            <person name="Liuni S."/>
            <person name="McWilliam S."/>
            <person name="Madan Babu M."/>
            <person name="Madera M."/>
            <person name="Marchionni L."/>
            <person name="Matsuda H."/>
            <person name="Matsuzawa S."/>
            <person name="Miki H."/>
            <person name="Mignone F."/>
            <person name="Miyake S."/>
            <person name="Morris K."/>
            <person name="Mottagui-Tabar S."/>
            <person name="Mulder N."/>
            <person name="Nakano N."/>
            <person name="Nakauchi H."/>
            <person name="Ng P."/>
            <person name="Nilsson R."/>
            <person name="Nishiguchi S."/>
            <person name="Nishikawa S."/>
            <person name="Nori F."/>
            <person name="Ohara O."/>
            <person name="Okazaki Y."/>
            <person name="Orlando V."/>
            <person name="Pang K.C."/>
            <person name="Pavan W.J."/>
            <person name="Pavesi G."/>
            <person name="Pesole G."/>
            <person name="Petrovsky N."/>
            <person name="Piazza S."/>
            <person name="Reed J."/>
            <person name="Reid J.F."/>
            <person name="Ring B.Z."/>
            <person name="Ringwald M."/>
            <person name="Rost B."/>
            <person name="Ruan Y."/>
            <person name="Salzberg S.L."/>
            <person name="Sandelin A."/>
            <person name="Schneider C."/>
            <person name="Schoenbach C."/>
            <person name="Sekiguchi K."/>
            <person name="Semple C.A."/>
            <person name="Seno S."/>
            <person name="Sessa L."/>
            <person name="Sheng Y."/>
            <person name="Shibata Y."/>
            <person name="Shimada H."/>
            <person name="Shimada K."/>
            <person name="Silva D."/>
            <person name="Sinclair B."/>
            <person name="Sperling S."/>
            <person name="Stupka E."/>
            <person name="Sugiura K."/>
            <person name="Sultana R."/>
            <person name="Takenaka Y."/>
            <person name="Taki K."/>
            <person name="Tammoja K."/>
            <person name="Tan S.L."/>
            <person name="Tang S."/>
            <person name="Taylor M.S."/>
            <person name="Tegner J."/>
            <person name="Teichmann S.A."/>
            <person name="Ueda H.R."/>
            <person name="van Nimwegen E."/>
            <person name="Verardo R."/>
            <person name="Wei C.L."/>
            <person name="Yagi K."/>
            <person name="Yamanishi H."/>
            <person name="Zabarovsky E."/>
            <person name="Zhu S."/>
            <person name="Zimmer A."/>
            <person name="Hide W."/>
            <person name="Bult C."/>
            <person name="Grimmond S.M."/>
            <person name="Teasdale R.D."/>
            <person name="Liu E.T."/>
            <person name="Brusic V."/>
            <person name="Quackenbush J."/>
            <person name="Wahlestedt C."/>
            <person name="Mattick J.S."/>
            <person name="Hume D.A."/>
            <person name="Kai C."/>
            <person name="Sasaki D."/>
            <person name="Tomaru Y."/>
            <person name="Fukuda S."/>
            <person name="Kanamori-Katayama M."/>
            <person name="Suzuki M."/>
            <person name="Aoki J."/>
            <person name="Arakawa T."/>
            <person name="Iida J."/>
            <person name="Imamura K."/>
            <person name="Itoh M."/>
            <person name="Kato T."/>
            <person name="Kawaji H."/>
            <person name="Kawagashira N."/>
            <person name="Kawashima T."/>
            <person name="Kojima M."/>
            <person name="Kondo S."/>
            <person name="Konno H."/>
            <person name="Nakano K."/>
            <person name="Ninomiya N."/>
            <person name="Nishio T."/>
            <person name="Okada M."/>
            <person name="Plessy C."/>
            <person name="Shibata K."/>
            <person name="Shiraki T."/>
            <person name="Suzuki S."/>
            <person name="Tagami M."/>
            <person name="Waki K."/>
            <person name="Watahiki A."/>
            <person name="Okamura-Oho Y."/>
            <person name="Suzuki H."/>
            <person name="Kawai J."/>
            <person name="Hayashizaki Y."/>
        </authorList>
    </citation>
    <scope>NUCLEOTIDE SEQUENCE [LARGE SCALE MRNA] (ISOFORM 2)</scope>
    <source>
        <strain>C57BL/6J</strain>
        <tissue>Embryo</tissue>
        <tissue>Embryonic head</tissue>
    </source>
</reference>
<reference key="4">
    <citation type="submission" date="2004-11" db="EMBL/GenBank/DDBJ databases">
        <authorList>
            <person name="Griffiths C."/>
            <person name="Sycamore N."/>
        </authorList>
    </citation>
    <scope>NUCLEOTIDE SEQUENCE [LARGE SCALE GENOMIC DNA]</scope>
</reference>
<reference key="5">
    <citation type="journal article" date="2004" name="Genome Res.">
        <title>The status, quality, and expansion of the NIH full-length cDNA project: the Mammalian Gene Collection (MGC).</title>
        <authorList>
            <consortium name="The MGC Project Team"/>
        </authorList>
    </citation>
    <scope>NUCLEOTIDE SEQUENCE [LARGE SCALE MRNA] (ISOFORMS 2 AND 3)</scope>
    <source>
        <tissue>Eye</tissue>
        <tissue>Olfactory epithelium</tissue>
    </source>
</reference>
<reference key="6">
    <citation type="journal article" date="1998" name="Proc. Natl. Acad. Sci. U.S.A.">
        <title>Identification of the Meg1/Grb10 imprinted gene on mouse proximal chromosome 11, a candidate for the Silver-Russell syndrome gene.</title>
        <authorList>
            <person name="Miyoshi N."/>
            <person name="Kuroiwa Y."/>
            <person name="Kohda T."/>
            <person name="Shitara H."/>
            <person name="Yonekawa H."/>
            <person name="Kawabe T."/>
            <person name="Hasegawa H."/>
            <person name="Barton S.C."/>
            <person name="Surani M.A."/>
            <person name="Kaneko-Ishino T."/>
            <person name="Ishino F."/>
        </authorList>
    </citation>
    <scope>IMPRINTING</scope>
    <scope>DEVELOPMENTAL STAGE</scope>
</reference>
<reference key="7">
    <citation type="journal article" date="1999" name="Mol. Cell. Biol.">
        <title>Grb10, a positive, stimulatory signaling adapter in platelet-derived growth factor BB-, insulin-like growth factor I-, and insulin-mediated mitogenesis.</title>
        <authorList>
            <person name="Wang J."/>
            <person name="Dai H."/>
            <person name="Yousaf N."/>
            <person name="Moussaif M."/>
            <person name="Deng Y."/>
            <person name="Boufelliga A."/>
            <person name="Swamy O.R."/>
            <person name="Leone M.E."/>
            <person name="Riedel H."/>
        </authorList>
    </citation>
    <scope>INTERACTION WITH FGFR1; INSR; IGF1R; MET AND PDGFRB</scope>
</reference>
<reference key="8">
    <citation type="journal article" date="2000" name="Hum. Mol. Genet.">
        <title>Human GRB10 is imprinted and expressed from the paternal and maternal allele in a highly tissue- and isoform-specific fashion.</title>
        <authorList>
            <person name="Blagitko N."/>
            <person name="Mergenthaler S."/>
            <person name="Schulz U."/>
            <person name="Wollmann H.A."/>
            <person name="Craigen W."/>
            <person name="Eggermann T."/>
            <person name="Ropers H.-H."/>
            <person name="Kalscheuer V.M."/>
        </authorList>
    </citation>
    <scope>IMPRINTING</scope>
</reference>
<reference key="9">
    <citation type="journal article" date="2003" name="J. Biol. Chem.">
        <title>Two novel proteins that are linked to insulin-like growth factor (IGF-I) receptors by the Grb10 adapter and modulate IGF-I signaling.</title>
        <authorList>
            <person name="Giovannone B."/>
            <person name="Lee E."/>
            <person name="Laviola L."/>
            <person name="Giorgino F."/>
            <person name="Cleveland K.A."/>
            <person name="Smith R.J."/>
        </authorList>
    </citation>
    <scope>INTERACTION WITH GIGYF1 AND GIGYF2</scope>
</reference>
<reference key="10">
    <citation type="journal article" date="2003" name="Mol. Cell. Biol.">
        <title>The Grb10/Nedd4 complex regulates ligand-induced ubiquitination and stability of the insulin-like growth factor I receptor.</title>
        <authorList>
            <person name="Vecchione A."/>
            <person name="Marchese A."/>
            <person name="Henry P."/>
            <person name="Rotin D."/>
            <person name="Morrione A."/>
        </authorList>
    </citation>
    <scope>FUNCTION</scope>
    <scope>INTERACTION WITH IGF1R AND NEDD4</scope>
</reference>
<reference key="11">
    <citation type="journal article" date="2003" name="Proc. Natl. Acad. Sci. U.S.A.">
        <title>Disruption of the imprinted Grb10 gene leads to disproportionate overgrowth by an Igf2-independent mechanism.</title>
        <authorList>
            <person name="Charalambous M."/>
            <person name="Smith F.M."/>
            <person name="Bennett W.R."/>
            <person name="Crew T.E."/>
            <person name="Mackenzie F."/>
            <person name="Ward A."/>
        </authorList>
    </citation>
    <scope>FUNCTION</scope>
    <scope>DISRUPTION PHENOTYPE</scope>
    <scope>IMPRINTING</scope>
    <scope>DEVELOPMENTAL STAGE</scope>
</reference>
<reference key="12">
    <citation type="journal article" date="2004" name="Mol. Cell. Proteomics">
        <title>Phosphoproteomic analysis of the developing mouse brain.</title>
        <authorList>
            <person name="Ballif B.A."/>
            <person name="Villen J."/>
            <person name="Beausoleil S.A."/>
            <person name="Schwartz D."/>
            <person name="Gygi S.P."/>
        </authorList>
    </citation>
    <scope>PHOSPHORYLATION [LARGE SCALE ANALYSIS] AT SER-96</scope>
    <scope>IDENTIFICATION BY MASS SPECTROMETRY [LARGE SCALE ANALYSIS]</scope>
    <source>
        <tissue>Embryonic brain</tissue>
    </source>
</reference>
<reference key="13">
    <citation type="journal article" date="2005" name="J. Biol. Chem.">
        <title>Phosphorylation of grb10 regulates its interaction with 14-3-3.</title>
        <authorList>
            <person name="Urschel S."/>
            <person name="Bassermann F."/>
            <person name="Bai R.Y."/>
            <person name="Munch S."/>
            <person name="Peschel C."/>
            <person name="Duyster J."/>
        </authorList>
    </citation>
    <scope>INTERACTION WITH AKT1 AND YWHAE</scope>
    <scope>PHOSPHORYLATION</scope>
</reference>
<reference key="14">
    <citation type="journal article" date="2005" name="Mol. Cell. Endocrinol.">
        <title>Distinct Grb10 domain requirements for effects on glucose uptake and insulin signaling.</title>
        <authorList>
            <person name="Mori K."/>
            <person name="Giovannone B."/>
            <person name="Smith R.J."/>
        </authorList>
    </citation>
    <scope>FUNCTION</scope>
    <scope>INTERACTION WITH INSR</scope>
</reference>
<reference key="15">
    <citation type="journal article" date="2007" name="Biochem. Biophys. Res. Commun.">
        <title>GRB10 binds to LRP6, the Wnt co-receptor and inhibits canonical Wnt signaling pathway.</title>
        <authorList>
            <person name="Tezuka N."/>
            <person name="Brown A.M."/>
            <person name="Yanagawa S."/>
        </authorList>
    </citation>
    <scope>FUNCTION</scope>
    <scope>INTERACTION WITH LRP6</scope>
</reference>
<reference key="16">
    <citation type="journal article" date="2007" name="Proc. Natl. Acad. Sci. U.S.A.">
        <title>Large-scale phosphorylation analysis of mouse liver.</title>
        <authorList>
            <person name="Villen J."/>
            <person name="Beausoleil S.A."/>
            <person name="Gerber S.A."/>
            <person name="Gygi S.P."/>
        </authorList>
    </citation>
    <scope>PHOSPHORYLATION [LARGE SCALE ANALYSIS] AT SER-458</scope>
    <scope>IDENTIFICATION BY MASS SPECTROMETRY [LARGE SCALE ANALYSIS]</scope>
    <source>
        <tissue>Liver</tissue>
    </source>
</reference>
<reference key="17">
    <citation type="journal article" date="2008" name="J. Cell. Physiol.">
        <title>Grb10/Nedd4-mediated multiubiquitination of the insulin-like growth factor receptor regulates receptor internalization.</title>
        <authorList>
            <person name="Monami G."/>
            <person name="Emiliozzi V."/>
            <person name="Morrione A."/>
        </authorList>
    </citation>
    <scope>FUNCTION</scope>
    <scope>SUBCELLULAR LOCATION</scope>
</reference>
<reference key="18">
    <citation type="journal article" date="2010" name="Cell">
        <title>A tissue-specific atlas of mouse protein phosphorylation and expression.</title>
        <authorList>
            <person name="Huttlin E.L."/>
            <person name="Jedrychowski M.P."/>
            <person name="Elias J.E."/>
            <person name="Goswami T."/>
            <person name="Rad R."/>
            <person name="Beausoleil S.A."/>
            <person name="Villen J."/>
            <person name="Haas W."/>
            <person name="Sowa M.E."/>
            <person name="Gygi S.P."/>
        </authorList>
    </citation>
    <scope>PHOSPHORYLATION [LARGE SCALE ANALYSIS] AT SER-458 AND SER-503</scope>
    <scope>IDENTIFICATION BY MASS SPECTROMETRY [LARGE SCALE ANALYSIS]</scope>
    <source>
        <tissue>Brown adipose tissue</tissue>
        <tissue>Heart</tissue>
        <tissue>Kidney</tissue>
        <tissue>Liver</tissue>
        <tissue>Lung</tissue>
        <tissue>Pancreas</tissue>
        <tissue>Spleen</tissue>
    </source>
</reference>
<proteinExistence type="evidence at protein level"/>
<feature type="chain" id="PRO_0000150347" description="Growth factor receptor-bound protein 10">
    <location>
        <begin position="1"/>
        <end position="621"/>
    </location>
</feature>
<feature type="domain" description="Ras-associating" evidence="4">
    <location>
        <begin position="194"/>
        <end position="278"/>
    </location>
</feature>
<feature type="domain" description="PH" evidence="3">
    <location>
        <begin position="318"/>
        <end position="427"/>
    </location>
</feature>
<feature type="domain" description="SH2" evidence="5">
    <location>
        <begin position="520"/>
        <end position="601"/>
    </location>
</feature>
<feature type="region of interest" description="Disordered" evidence="6">
    <location>
        <begin position="1"/>
        <end position="118"/>
    </location>
</feature>
<feature type="compositionally biased region" description="Polar residues" evidence="6">
    <location>
        <begin position="1"/>
        <end position="23"/>
    </location>
</feature>
<feature type="compositionally biased region" description="Polar residues" evidence="6">
    <location>
        <begin position="33"/>
        <end position="59"/>
    </location>
</feature>
<feature type="compositionally biased region" description="Pro residues" evidence="6">
    <location>
        <begin position="95"/>
        <end position="112"/>
    </location>
</feature>
<feature type="modified residue" description="Phosphoserine" evidence="2">
    <location>
        <position position="50"/>
    </location>
</feature>
<feature type="modified residue" description="Phosphoserine" evidence="20">
    <location>
        <position position="96"/>
    </location>
</feature>
<feature type="modified residue" description="Phosphoserine; by MTOR and PKB/AKT1" evidence="2">
    <location>
        <position position="455"/>
    </location>
</feature>
<feature type="modified residue" description="Phosphoserine" evidence="21 22">
    <location>
        <position position="458"/>
    </location>
</feature>
<feature type="modified residue" description="Phosphoserine" evidence="22">
    <location>
        <position position="503"/>
    </location>
</feature>
<feature type="splice variant" id="VSP_012379" description="In isoform 3." evidence="16">
    <location>
        <begin position="117"/>
        <end position="196"/>
    </location>
</feature>
<feature type="splice variant" id="VSP_001844" description="In isoform 2." evidence="16 17 18">
    <location>
        <begin position="117"/>
        <end position="141"/>
    </location>
</feature>
<feature type="sequence conflict" description="In Ref. 1; AAB53687." evidence="19" ref="1">
    <original>KR</original>
    <variation>NG</variation>
    <location>
        <begin position="491"/>
        <end position="492"/>
    </location>
</feature>
<feature type="sequence conflict" description="In Ref. 3; BAC28088." evidence="19" ref="3">
    <original>A</original>
    <variation>T</variation>
    <location>
        <position position="555"/>
    </location>
</feature>
<feature type="helix" evidence="23">
    <location>
        <begin position="515"/>
        <end position="517"/>
    </location>
</feature>
<feature type="helix" evidence="23">
    <location>
        <begin position="527"/>
        <end position="536"/>
    </location>
</feature>
<feature type="strand" evidence="23">
    <location>
        <begin position="543"/>
        <end position="548"/>
    </location>
</feature>
<feature type="strand" evidence="23">
    <location>
        <begin position="556"/>
        <end position="562"/>
    </location>
</feature>
<feature type="strand" evidence="23">
    <location>
        <begin position="565"/>
        <end position="576"/>
    </location>
</feature>
<feature type="strand" evidence="23">
    <location>
        <begin position="579"/>
        <end position="585"/>
    </location>
</feature>
<feature type="strand" evidence="23">
    <location>
        <begin position="588"/>
        <end position="593"/>
    </location>
</feature>
<feature type="helix" evidence="23">
    <location>
        <begin position="594"/>
        <end position="601"/>
    </location>
</feature>
<feature type="strand" evidence="23">
    <location>
        <begin position="608"/>
        <end position="610"/>
    </location>
</feature>
<comment type="function">
    <text evidence="7 8 9 11 12">Adapter protein which modulates coupling of a number of cell surface receptor kinases with specific signaling pathways. Binds to, and suppress signals from, activated receptors tyrosine kinases, including the insulin (INSR) and insulin-like growth factor (IGF1R) receptors. The inhibitory effect can be achieved by 2 mechanisms: interference with the signaling pathway and increased receptor degradation. Delays and reduces AKT1 phosphorylation in response to insulin stimulation. Blocks association between INSR and IRS1 and IRS2 and prevents insulin-stimulated IRS1 and IRS2 tyrosine phosphorylation. Recruits NEDD4 to IGF1R, leading to IGF1R ubiquitination, increased internalization and degradation by both the proteasomal and lysosomal pathways. A similar role in the mediation of ubiquitination also has been suggested with INSR. Negatively regulates Wnt signaling by interacting with LRP6 intracellular portion and interfering with the binding of AXIN1 to LRP6. Positive regulator of the KDR/VEGFR-2 signaling pathway. May inhibit NEDD4-mediated degradation of KDR/VEGFR-2.</text>
</comment>
<comment type="activity regulation">
    <text evidence="1">Phosphorylation by mTORC1 stabilizes and activates GRB10 constituting a feedback pathway by which mTORC1 inhibits INSR-dependent signaling.</text>
</comment>
<comment type="subunit">
    <text evidence="1">Interacts with ligand-activated tyrosine kinase receptors, including FGFR1, INSR, IGF1R, MET and PDGFRB in a phosphotyrosine-dependent manner through the SH2 domain. Poorly binds to the EGFR. Directly interacts with MAP3K14/NIK and is recruited to the EGFR-ERBB2 complex (By similarity). Interacts with GIGYF1/PERQ1 and GIGYF2/TNRC15. When unphosphorylated, interacts with AKT1 and when phosphorylated with YWHAE/14-3-3 epsilon. Interacts with NEDD4. Interacts with LRP6, thus interfering with the binding of AXIN1 to LRP6. Binds to activated NRAS (By similarity).</text>
</comment>
<comment type="interaction">
    <interactant intactId="EBI-861810">
        <id>Q60760</id>
    </interactant>
    <interactant intactId="EBI-6999015">
        <id>P15208</id>
        <label>Insr</label>
    </interactant>
    <organismsDiffer>false</organismsDiffer>
    <experiments>6</experiments>
</comment>
<comment type="interaction">
    <interactant intactId="EBI-861810">
        <id>Q60760</id>
    </interactant>
    <interactant intactId="EBI-773516">
        <id>P46935</id>
        <label>Nedd4</label>
    </interactant>
    <organismsDiffer>false</organismsDiffer>
    <experiments>7</experiments>
</comment>
<comment type="subcellular location">
    <subcellularLocation>
        <location evidence="12">Cytoplasm</location>
    </subcellularLocation>
    <text>When complexed with NEDD4 and IGF1R, follows IGF1R internalization, remaining associated with early endosomes. Uncouples from IGF1R before the sorting of the receptor to the lysosomal compartment.</text>
</comment>
<comment type="alternative products">
    <event type="alternative splicing"/>
    <isoform>
        <id>Q60760-1</id>
        <name>1</name>
        <name>Alpha</name>
        <sequence type="displayed"/>
    </isoform>
    <isoform>
        <id>Q60760-2</id>
        <name>2</name>
        <name>Delta</name>
        <sequence type="described" ref="VSP_001844"/>
    </isoform>
    <isoform>
        <id>Q60760-3</id>
        <name>3</name>
        <sequence type="described" ref="VSP_012379"/>
    </isoform>
</comment>
<comment type="tissue specificity">
    <text evidence="13 14">Widely expressed.</text>
</comment>
<comment type="developmental stage">
    <text evidence="8 15">At 13.5 dpc, expressed in most embryonic tissues and in placenta. At 14.5 dpc, expressed at high levels in a variety of muscle tissues, including that of the face and trunk, the intercostal muscles, the diaphragm and cardiac muscle, the tongue and limbs (at protein level). In the brain, most abundant expression in the subependymal layers, in the meninges and in the choroid plexus (both epithelium and mesenchyme) (at protein level). High levels in the liver, bronchioles and the cartilage of the atlas, ribs and long bones (at protein level). In the kidney, expression limited to the developing tubules and mesenchyme (at protein level). Also detected in the adrenal gland and pancreatic bud (at protein level). At 12.5 dpc, paternal allele expression detected in the cartilage of the limbs, ribs and face and in the meninges. At 14.5 dpc, paternal allele expressed in the cartilage of the axis, ribs, head, and long bones, in the heart, lungs, gut, umbilicus and tongue, as well as in the meninges of the fourth ventricle. Not detected in the skeletal muscle. In most tissues, paternal expression is lower than maternal.</text>
</comment>
<comment type="domain">
    <text evidence="1">The PH domain binds relatively non-specifically to several phosphoinositides, including PI(5)P, PI(4,5)P2, PI(3,4)P2 and PI(3,4,5)P3, with modest affinities.</text>
</comment>
<comment type="PTM">
    <text evidence="10 13">Phosphorylated on serine residues upon EGF, FGF and PDGF stimulation.</text>
</comment>
<comment type="disruption phenotype">
    <text evidence="8">Disruption of the maternal allele results in overgrowth of both the embryo and placenta such that mutant mice are at birth about 30% larger than normal. This effect occurs during embryogenesis and results in addition in disproportionate overgrowth of the liver with relative sparing of the brain. The major part of the growth phenotype seems to be IGF2-independent.</text>
</comment>
<comment type="miscellaneous">
    <text>The GRB10 locus is imprinted. The maternal allele is expressed in most tissues, except the brain where it is expressed from the paternal allele. Expression from the maternal allele in fetal and adult brain was however described in PubMed:10861285.</text>
</comment>
<comment type="miscellaneous">
    <molecule>Isoform 2</molecule>
    <text evidence="19">Predominant isoform in most tissues.</text>
</comment>
<comment type="similarity">
    <text evidence="19">Belongs to the GRB7/10/14 family.</text>
</comment>
<comment type="sequence caution" evidence="19">
    <conflict type="erroneous initiation">
        <sequence resource="EMBL-CDS" id="AAH53842"/>
    </conflict>
</comment>
<comment type="sequence caution" evidence="19">
    <conflict type="erroneous initiation">
        <sequence resource="EMBL-CDS" id="BAE37514"/>
    </conflict>
</comment>
<evidence type="ECO:0000250" key="1"/>
<evidence type="ECO:0000250" key="2">
    <source>
        <dbReference type="UniProtKB" id="Q13322"/>
    </source>
</evidence>
<evidence type="ECO:0000255" key="3">
    <source>
        <dbReference type="PROSITE-ProRule" id="PRU00145"/>
    </source>
</evidence>
<evidence type="ECO:0000255" key="4">
    <source>
        <dbReference type="PROSITE-ProRule" id="PRU00166"/>
    </source>
</evidence>
<evidence type="ECO:0000255" key="5">
    <source>
        <dbReference type="PROSITE-ProRule" id="PRU00191"/>
    </source>
</evidence>
<evidence type="ECO:0000256" key="6">
    <source>
        <dbReference type="SAM" id="MobiDB-lite"/>
    </source>
</evidence>
<evidence type="ECO:0000269" key="7">
    <source>
    </source>
</evidence>
<evidence type="ECO:0000269" key="8">
    <source>
    </source>
</evidence>
<evidence type="ECO:0000269" key="9">
    <source>
    </source>
</evidence>
<evidence type="ECO:0000269" key="10">
    <source>
    </source>
</evidence>
<evidence type="ECO:0000269" key="11">
    <source>
    </source>
</evidence>
<evidence type="ECO:0000269" key="12">
    <source>
    </source>
</evidence>
<evidence type="ECO:0000269" key="13">
    <source>
    </source>
</evidence>
<evidence type="ECO:0000269" key="14">
    <source>
    </source>
</evidence>
<evidence type="ECO:0000269" key="15">
    <source>
    </source>
</evidence>
<evidence type="ECO:0000303" key="16">
    <source>
    </source>
</evidence>
<evidence type="ECO:0000303" key="17">
    <source>
    </source>
</evidence>
<evidence type="ECO:0000303" key="18">
    <source>
    </source>
</evidence>
<evidence type="ECO:0000305" key="19"/>
<evidence type="ECO:0007744" key="20">
    <source>
    </source>
</evidence>
<evidence type="ECO:0007744" key="21">
    <source>
    </source>
</evidence>
<evidence type="ECO:0007744" key="22">
    <source>
    </source>
</evidence>
<evidence type="ECO:0007829" key="23">
    <source>
        <dbReference type="PDB" id="3M7F"/>
    </source>
</evidence>
<organism>
    <name type="scientific">Mus musculus</name>
    <name type="common">Mouse</name>
    <dbReference type="NCBI Taxonomy" id="10090"/>
    <lineage>
        <taxon>Eukaryota</taxon>
        <taxon>Metazoa</taxon>
        <taxon>Chordata</taxon>
        <taxon>Craniata</taxon>
        <taxon>Vertebrata</taxon>
        <taxon>Euteleostomi</taxon>
        <taxon>Mammalia</taxon>
        <taxon>Eutheria</taxon>
        <taxon>Euarchontoglires</taxon>
        <taxon>Glires</taxon>
        <taxon>Rodentia</taxon>
        <taxon>Myomorpha</taxon>
        <taxon>Muroidea</taxon>
        <taxon>Muridae</taxon>
        <taxon>Murinae</taxon>
        <taxon>Mus</taxon>
        <taxon>Mus</taxon>
    </lineage>
</organism>
<gene>
    <name type="primary">Grb10</name>
    <name type="synonym">Meg1</name>
</gene>
<keyword id="KW-0002">3D-structure</keyword>
<keyword id="KW-0025">Alternative splicing</keyword>
<keyword id="KW-0963">Cytoplasm</keyword>
<keyword id="KW-0597">Phosphoprotein</keyword>
<keyword id="KW-1185">Reference proteome</keyword>
<keyword id="KW-0727">SH2 domain</keyword>
<accession>Q60760</accession>
<accession>O35352</accession>
<accession>Q3TQ71</accession>
<accession>Q7TSA4</accession>
<accession>Q8BSH4</accession>
<accession>Q8BSS5</accession>
<accession>Q91WC5</accession>
<dbReference type="EMBL" id="U18996">
    <property type="protein sequence ID" value="AAB53687.1"/>
    <property type="molecule type" value="mRNA"/>
</dbReference>
<dbReference type="EMBL" id="AF022072">
    <property type="protein sequence ID" value="AAB72103.1"/>
    <property type="molecule type" value="mRNA"/>
</dbReference>
<dbReference type="EMBL" id="AK030727">
    <property type="protein sequence ID" value="BAC27100.1"/>
    <property type="molecule type" value="mRNA"/>
</dbReference>
<dbReference type="EMBL" id="AK032927">
    <property type="protein sequence ID" value="BAC28088.1"/>
    <property type="molecule type" value="mRNA"/>
</dbReference>
<dbReference type="EMBL" id="AK163841">
    <property type="protein sequence ID" value="BAE37514.1"/>
    <property type="status" value="ALT_INIT"/>
    <property type="molecule type" value="mRNA"/>
</dbReference>
<dbReference type="EMBL" id="AL645803">
    <property type="status" value="NOT_ANNOTATED_CDS"/>
    <property type="molecule type" value="Genomic_DNA"/>
</dbReference>
<dbReference type="EMBL" id="AL663087">
    <property type="status" value="NOT_ANNOTATED_CDS"/>
    <property type="molecule type" value="Genomic_DNA"/>
</dbReference>
<dbReference type="EMBL" id="BC016111">
    <property type="protein sequence ID" value="AAH16111.1"/>
    <property type="molecule type" value="mRNA"/>
</dbReference>
<dbReference type="EMBL" id="BC053842">
    <property type="protein sequence ID" value="AAH53842.1"/>
    <property type="status" value="ALT_INIT"/>
    <property type="molecule type" value="mRNA"/>
</dbReference>
<dbReference type="CCDS" id="CCDS24440.1">
    <molecule id="Q60760-2"/>
</dbReference>
<dbReference type="CCDS" id="CCDS48754.1">
    <molecule id="Q60760-3"/>
</dbReference>
<dbReference type="PIR" id="I49199">
    <property type="entry name" value="I49199"/>
</dbReference>
<dbReference type="RefSeq" id="NP_001171100.1">
    <molecule id="Q60760-3"/>
    <property type="nucleotide sequence ID" value="NM_001177629.1"/>
</dbReference>
<dbReference type="RefSeq" id="NP_001357532.1">
    <molecule id="Q60760-1"/>
    <property type="nucleotide sequence ID" value="NM_001370603.1"/>
</dbReference>
<dbReference type="RefSeq" id="NP_034475.2">
    <molecule id="Q60760-2"/>
    <property type="nucleotide sequence ID" value="NM_010345.4"/>
</dbReference>
<dbReference type="RefSeq" id="XP_006514592.1">
    <property type="nucleotide sequence ID" value="XM_006514529.1"/>
</dbReference>
<dbReference type="RefSeq" id="XP_011241966.1">
    <molecule id="Q60760-3"/>
    <property type="nucleotide sequence ID" value="XM_011243664.2"/>
</dbReference>
<dbReference type="PDB" id="3M7F">
    <property type="method" value="X-ray"/>
    <property type="resolution" value="2.00 A"/>
    <property type="chains" value="A=514-621"/>
</dbReference>
<dbReference type="PDBsum" id="3M7F"/>
<dbReference type="SMR" id="Q60760"/>
<dbReference type="BioGRID" id="200045">
    <property type="interactions" value="6"/>
</dbReference>
<dbReference type="CORUM" id="Q60760"/>
<dbReference type="DIP" id="DIP-446N"/>
<dbReference type="FunCoup" id="Q60760">
    <property type="interactions" value="363"/>
</dbReference>
<dbReference type="IntAct" id="Q60760">
    <property type="interactions" value="7"/>
</dbReference>
<dbReference type="MINT" id="Q60760"/>
<dbReference type="STRING" id="10090.ENSMUSP00000091011"/>
<dbReference type="GlyGen" id="Q60760">
    <property type="glycosylation" value="2 sites, 1 N-linked glycan (1 site), 1 O-linked glycan (1 site)"/>
</dbReference>
<dbReference type="iPTMnet" id="Q60760"/>
<dbReference type="PhosphoSitePlus" id="Q60760"/>
<dbReference type="PaxDb" id="10090-ENSMUSP00000091011"/>
<dbReference type="PeptideAtlas" id="Q60760"/>
<dbReference type="ProteomicsDB" id="271291">
    <molecule id="Q60760-1"/>
</dbReference>
<dbReference type="ProteomicsDB" id="271292">
    <molecule id="Q60760-2"/>
</dbReference>
<dbReference type="ProteomicsDB" id="271293">
    <molecule id="Q60760-3"/>
</dbReference>
<dbReference type="Pumba" id="Q60760"/>
<dbReference type="Antibodypedia" id="27751">
    <property type="antibodies" value="487 antibodies from 36 providers"/>
</dbReference>
<dbReference type="DNASU" id="14783"/>
<dbReference type="Ensembl" id="ENSMUST00000093321.12">
    <molecule id="Q60760-2"/>
    <property type="protein sequence ID" value="ENSMUSP00000091011.6"/>
    <property type="gene ID" value="ENSMUSG00000020176.18"/>
</dbReference>
<dbReference type="Ensembl" id="ENSMUST00000109654.8">
    <molecule id="Q60760-3"/>
    <property type="protein sequence ID" value="ENSMUSP00000105281.2"/>
    <property type="gene ID" value="ENSMUSG00000020176.18"/>
</dbReference>
<dbReference type="GeneID" id="14783"/>
<dbReference type="KEGG" id="mmu:14783"/>
<dbReference type="UCSC" id="uc007iaz.2">
    <molecule id="Q60760-3"/>
    <property type="organism name" value="mouse"/>
</dbReference>
<dbReference type="UCSC" id="uc007iba.2">
    <molecule id="Q60760-2"/>
    <property type="organism name" value="mouse"/>
</dbReference>
<dbReference type="AGR" id="MGI:103232"/>
<dbReference type="CTD" id="2887"/>
<dbReference type="MGI" id="MGI:103232">
    <property type="gene designation" value="Grb10"/>
</dbReference>
<dbReference type="VEuPathDB" id="HostDB:ENSMUSG00000020176"/>
<dbReference type="eggNOG" id="KOG3751">
    <property type="taxonomic scope" value="Eukaryota"/>
</dbReference>
<dbReference type="GeneTree" id="ENSGT00940000155909"/>
<dbReference type="HOGENOM" id="CLU_023207_0_1_1"/>
<dbReference type="InParanoid" id="Q60760"/>
<dbReference type="OMA" id="WKKLYVY"/>
<dbReference type="PhylomeDB" id="Q60760"/>
<dbReference type="TreeFam" id="TF317511"/>
<dbReference type="Reactome" id="R-MMU-1433557">
    <property type="pathway name" value="Signaling by SCF-KIT"/>
</dbReference>
<dbReference type="Reactome" id="R-MMU-74713">
    <property type="pathway name" value="IRS activation"/>
</dbReference>
<dbReference type="Reactome" id="R-MMU-74749">
    <property type="pathway name" value="Signal attenuation"/>
</dbReference>
<dbReference type="Reactome" id="R-MMU-74751">
    <property type="pathway name" value="Insulin receptor signalling cascade"/>
</dbReference>
<dbReference type="Reactome" id="R-MMU-8853659">
    <property type="pathway name" value="RET signaling"/>
</dbReference>
<dbReference type="Reactome" id="R-MMU-9607240">
    <property type="pathway name" value="FLT3 Signaling"/>
</dbReference>
<dbReference type="BioGRID-ORCS" id="14783">
    <property type="hits" value="4 hits in 77 CRISPR screens"/>
</dbReference>
<dbReference type="ChiTaRS" id="Grb10">
    <property type="organism name" value="mouse"/>
</dbReference>
<dbReference type="EvolutionaryTrace" id="Q60760"/>
<dbReference type="PRO" id="PR:Q60760"/>
<dbReference type="Proteomes" id="UP000000589">
    <property type="component" value="Chromosome 11"/>
</dbReference>
<dbReference type="RNAct" id="Q60760">
    <property type="molecule type" value="protein"/>
</dbReference>
<dbReference type="Bgee" id="ENSMUSG00000020176">
    <property type="expression patterns" value="Expressed in associated mesenchyme of midgut and 261 other cell types or tissues"/>
</dbReference>
<dbReference type="ExpressionAtlas" id="Q60760">
    <property type="expression patterns" value="baseline and differential"/>
</dbReference>
<dbReference type="GO" id="GO:0005829">
    <property type="term" value="C:cytosol"/>
    <property type="evidence" value="ECO:0000304"/>
    <property type="project" value="MGI"/>
</dbReference>
<dbReference type="GO" id="GO:0032991">
    <property type="term" value="C:protein-containing complex"/>
    <property type="evidence" value="ECO:0007669"/>
    <property type="project" value="Ensembl"/>
</dbReference>
<dbReference type="GO" id="GO:0005158">
    <property type="term" value="F:insulin receptor binding"/>
    <property type="evidence" value="ECO:0000353"/>
    <property type="project" value="BHF-UCL"/>
</dbReference>
<dbReference type="GO" id="GO:0001784">
    <property type="term" value="F:phosphotyrosine residue binding"/>
    <property type="evidence" value="ECO:0000304"/>
    <property type="project" value="BHF-UCL"/>
</dbReference>
<dbReference type="GO" id="GO:0030674">
    <property type="term" value="F:protein-macromolecule adaptor activity"/>
    <property type="evidence" value="ECO:0000314"/>
    <property type="project" value="MGI"/>
</dbReference>
<dbReference type="GO" id="GO:0030159">
    <property type="term" value="F:signaling receptor complex adaptor activity"/>
    <property type="evidence" value="ECO:0000353"/>
    <property type="project" value="BHF-UCL"/>
</dbReference>
<dbReference type="GO" id="GO:0070371">
    <property type="term" value="P:ERK1 and ERK2 cascade"/>
    <property type="evidence" value="ECO:0000315"/>
    <property type="project" value="MGI"/>
</dbReference>
<dbReference type="GO" id="GO:0010467">
    <property type="term" value="P:gene expression"/>
    <property type="evidence" value="ECO:0000315"/>
    <property type="project" value="MGI"/>
</dbReference>
<dbReference type="GO" id="GO:0048009">
    <property type="term" value="P:insulin-like growth factor receptor signaling pathway"/>
    <property type="evidence" value="ECO:0000353"/>
    <property type="project" value="MGI"/>
</dbReference>
<dbReference type="GO" id="GO:0046325">
    <property type="term" value="P:negative regulation of D-glucose import"/>
    <property type="evidence" value="ECO:0000315"/>
    <property type="project" value="BHF-UCL"/>
</dbReference>
<dbReference type="GO" id="GO:0045719">
    <property type="term" value="P:negative regulation of glycogen biosynthetic process"/>
    <property type="evidence" value="ECO:0000304"/>
    <property type="project" value="BHF-UCL"/>
</dbReference>
<dbReference type="GO" id="GO:0046627">
    <property type="term" value="P:negative regulation of insulin receptor signaling pathway"/>
    <property type="evidence" value="ECO:0000315"/>
    <property type="project" value="BHF-UCL"/>
</dbReference>
<dbReference type="GO" id="GO:0030178">
    <property type="term" value="P:negative regulation of Wnt signaling pathway"/>
    <property type="evidence" value="ECO:0000314"/>
    <property type="project" value="UniProtKB"/>
</dbReference>
<dbReference type="GO" id="GO:0120162">
    <property type="term" value="P:positive regulation of cold-induced thermogenesis"/>
    <property type="evidence" value="ECO:0000315"/>
    <property type="project" value="YuBioLab"/>
</dbReference>
<dbReference type="GO" id="GO:0030949">
    <property type="term" value="P:positive regulation of vascular endothelial growth factor receptor signaling pathway"/>
    <property type="evidence" value="ECO:0000250"/>
    <property type="project" value="UniProtKB"/>
</dbReference>
<dbReference type="GO" id="GO:0007165">
    <property type="term" value="P:signal transduction"/>
    <property type="evidence" value="ECO:0000304"/>
    <property type="project" value="MGI"/>
</dbReference>
<dbReference type="GO" id="GO:1904738">
    <property type="term" value="P:vascular associated smooth muscle cell migration"/>
    <property type="evidence" value="ECO:0000315"/>
    <property type="project" value="MGI"/>
</dbReference>
<dbReference type="CDD" id="cd01259">
    <property type="entry name" value="PH_APBB1IP"/>
    <property type="match status" value="1"/>
</dbReference>
<dbReference type="CDD" id="cd16141">
    <property type="entry name" value="RA_GRB10"/>
    <property type="match status" value="1"/>
</dbReference>
<dbReference type="CDD" id="cd10415">
    <property type="entry name" value="SH2_Grb10"/>
    <property type="match status" value="1"/>
</dbReference>
<dbReference type="FunFam" id="3.30.505.10:FF:000015">
    <property type="entry name" value="Growth factor receptor-bound protein 10 isoform X1"/>
    <property type="match status" value="1"/>
</dbReference>
<dbReference type="FunFam" id="2.30.29.30:FF:000062">
    <property type="entry name" value="growth factor receptor-bound protein 10 isoform X1"/>
    <property type="match status" value="1"/>
</dbReference>
<dbReference type="FunFam" id="3.10.20.90:FF:000056">
    <property type="entry name" value="growth factor receptor-bound protein 10 isoform X1"/>
    <property type="match status" value="1"/>
</dbReference>
<dbReference type="Gene3D" id="3.10.20.90">
    <property type="entry name" value="Phosphatidylinositol 3-kinase Catalytic Subunit, Chain A, domain 1"/>
    <property type="match status" value="1"/>
</dbReference>
<dbReference type="Gene3D" id="2.30.29.30">
    <property type="entry name" value="Pleckstrin-homology domain (PH domain)/Phosphotyrosine-binding domain (PTB)"/>
    <property type="match status" value="1"/>
</dbReference>
<dbReference type="Gene3D" id="3.30.505.10">
    <property type="entry name" value="SH2 domain"/>
    <property type="match status" value="1"/>
</dbReference>
<dbReference type="InterPro" id="IPR015042">
    <property type="entry name" value="BPS-dom"/>
</dbReference>
<dbReference type="InterPro" id="IPR039664">
    <property type="entry name" value="GRB/APBB1IP"/>
</dbReference>
<dbReference type="InterPro" id="IPR035037">
    <property type="entry name" value="Grb10_SH2"/>
</dbReference>
<dbReference type="InterPro" id="IPR011993">
    <property type="entry name" value="PH-like_dom_sf"/>
</dbReference>
<dbReference type="InterPro" id="IPR039665">
    <property type="entry name" value="PH_APBB1IP"/>
</dbReference>
<dbReference type="InterPro" id="IPR001849">
    <property type="entry name" value="PH_domain"/>
</dbReference>
<dbReference type="InterPro" id="IPR000159">
    <property type="entry name" value="RA_dom"/>
</dbReference>
<dbReference type="InterPro" id="IPR000980">
    <property type="entry name" value="SH2"/>
</dbReference>
<dbReference type="InterPro" id="IPR036860">
    <property type="entry name" value="SH2_dom_sf"/>
</dbReference>
<dbReference type="InterPro" id="IPR029071">
    <property type="entry name" value="Ubiquitin-like_domsf"/>
</dbReference>
<dbReference type="PANTHER" id="PTHR11243">
    <property type="entry name" value="GROWTH FACTOR RECEPTOR-BOUND PROTEIN"/>
    <property type="match status" value="1"/>
</dbReference>
<dbReference type="PANTHER" id="PTHR11243:SF4">
    <property type="entry name" value="GROWTH FACTOR RECEPTOR-BOUND PROTEIN 10"/>
    <property type="match status" value="1"/>
</dbReference>
<dbReference type="Pfam" id="PF08947">
    <property type="entry name" value="BPS"/>
    <property type="match status" value="1"/>
</dbReference>
<dbReference type="Pfam" id="PF00169">
    <property type="entry name" value="PH"/>
    <property type="match status" value="1"/>
</dbReference>
<dbReference type="Pfam" id="PF21989">
    <property type="entry name" value="RA_2"/>
    <property type="match status" value="1"/>
</dbReference>
<dbReference type="Pfam" id="PF00017">
    <property type="entry name" value="SH2"/>
    <property type="match status" value="1"/>
</dbReference>
<dbReference type="PRINTS" id="PR00401">
    <property type="entry name" value="SH2DOMAIN"/>
</dbReference>
<dbReference type="SMART" id="SM00233">
    <property type="entry name" value="PH"/>
    <property type="match status" value="1"/>
</dbReference>
<dbReference type="SMART" id="SM00314">
    <property type="entry name" value="RA"/>
    <property type="match status" value="1"/>
</dbReference>
<dbReference type="SMART" id="SM00252">
    <property type="entry name" value="SH2"/>
    <property type="match status" value="1"/>
</dbReference>
<dbReference type="SUPFAM" id="SSF50729">
    <property type="entry name" value="PH domain-like"/>
    <property type="match status" value="1"/>
</dbReference>
<dbReference type="SUPFAM" id="SSF55550">
    <property type="entry name" value="SH2 domain"/>
    <property type="match status" value="1"/>
</dbReference>
<dbReference type="SUPFAM" id="SSF54236">
    <property type="entry name" value="Ubiquitin-like"/>
    <property type="match status" value="1"/>
</dbReference>
<dbReference type="PROSITE" id="PS50003">
    <property type="entry name" value="PH_DOMAIN"/>
    <property type="match status" value="1"/>
</dbReference>
<dbReference type="PROSITE" id="PS50200">
    <property type="entry name" value="RA"/>
    <property type="match status" value="1"/>
</dbReference>
<dbReference type="PROSITE" id="PS50001">
    <property type="entry name" value="SH2"/>
    <property type="match status" value="1"/>
</dbReference>
<protein>
    <recommendedName>
        <fullName>Growth factor receptor-bound protein 10</fullName>
    </recommendedName>
    <alternativeName>
        <fullName>GRB10 adapter protein</fullName>
    </alternativeName>
    <alternativeName>
        <fullName>Maternally expressed gene 1 protein</fullName>
    </alternativeName>
</protein>
<sequence>MNNDINSSVESLNSACNMQSDTDTAPLLEDGQHASNQGAASSSRGQPQASPRQKMQRSQPVHILRRLQEEDQQLRTASLPAIPNPFPELTGAAPGSPPSVAPSSLPPPPSQPPAKHCGRCEKWIPGENTRGNGKRKIWRWQFPPGFQLSKLTRPGLWTKTTARFSKKQPKNQCPTDTVNPVARMPTSQMEKLRLRKDVKVFSEDGTSKVVEILTDMTARDLCQLLVYKSHCVDDNSWTLVEHHPQLGLERCLEDHEIVVQVESTMPSESKFLFRKNYAKYEFFKNPVNFFPDQMVNWCQQSNGGQAQLLQNFLNTSSCPEIQGFLQVKEVGRKSWKKLYVCLRRSGLYYSTKGTSKEPRHLQLLADLEESSIFYLIAGKKQYNAPNEHGMCIKPNKAKTEMKELRLLCAEDEQIRTCWMTAFRLLKYGMLLYQNYRIPQRKGLPPPFNAPMRSVSENSLVAMDFSGQIGRVIDNPAEAQSAALEEGHAWRKRSTRMNILSSQSPLHPSTLNAVIHRTQHWFHGRISREESHRIIKQQGLVDGLFLLRDSQSNPKAFVLTLCHHQKIKNFQILPCEDDGQTFFTLDDGNTKFSDLIQLVDFYQLNKGVLPCKLKHHCIRVAL</sequence>